<comment type="function">
    <text evidence="1">Required for the assembly of the V0 complex of the vacuolar ATPase (V-ATPase) in the endoplasmic reticulum.</text>
</comment>
<comment type="subcellular location">
    <subcellularLocation>
        <location evidence="1">Endoplasmic reticulum membrane</location>
        <topology evidence="1">Multi-pass membrane protein</topology>
    </subcellularLocation>
    <subcellularLocation>
        <location evidence="1">Endoplasmic reticulum-Golgi intermediate compartment membrane</location>
        <topology evidence="1">Multi-pass membrane protein</topology>
    </subcellularLocation>
    <subcellularLocation>
        <location evidence="1">Cytoplasmic vesicle</location>
        <location evidence="1">COPII-coated vesicle membrane</location>
        <topology evidence="1">Multi-pass membrane protein</topology>
    </subcellularLocation>
</comment>
<comment type="similarity">
    <text evidence="1">Belongs to the VMA21 family.</text>
</comment>
<name>VMA21_DROER</name>
<protein>
    <recommendedName>
        <fullName evidence="1">Vacuolar ATPase assembly integral membrane protein VMA21 homolog</fullName>
    </recommendedName>
</protein>
<keyword id="KW-0968">Cytoplasmic vesicle</keyword>
<keyword id="KW-0256">Endoplasmic reticulum</keyword>
<keyword id="KW-0472">Membrane</keyword>
<keyword id="KW-0812">Transmembrane</keyword>
<keyword id="KW-1133">Transmembrane helix</keyword>
<evidence type="ECO:0000255" key="1">
    <source>
        <dbReference type="HAMAP-Rule" id="MF_03058"/>
    </source>
</evidence>
<evidence type="ECO:0000256" key="2">
    <source>
        <dbReference type="SAM" id="MobiDB-lite"/>
    </source>
</evidence>
<sequence length="105" mass="11403">MSTKNKKAAGGNGGAPKQTRQQSHDSQDYSSFKTVLFYCMLIVFLPVLTFFVLKGFVLDQFLDISEVKVNIASAVGAVVALHIALGLYIYRAYFGTTGSKASKTD</sequence>
<reference key="1">
    <citation type="journal article" date="2007" name="Nature">
        <title>Evolution of genes and genomes on the Drosophila phylogeny.</title>
        <authorList>
            <consortium name="Drosophila 12 genomes consortium"/>
        </authorList>
    </citation>
    <scope>NUCLEOTIDE SEQUENCE [LARGE SCALE GENOMIC DNA]</scope>
    <source>
        <strain>Tucson 14021-0224.01</strain>
    </source>
</reference>
<dbReference type="EMBL" id="CH954178">
    <property type="protein sequence ID" value="EDV52526.1"/>
    <property type="molecule type" value="Genomic_DNA"/>
</dbReference>
<dbReference type="SMR" id="B3NIN0"/>
<dbReference type="EnsemblMetazoa" id="FBtr0136172">
    <property type="protein sequence ID" value="FBpp0134664"/>
    <property type="gene ID" value="FBgn0108353"/>
</dbReference>
<dbReference type="EnsemblMetazoa" id="XM_001973464.3">
    <property type="protein sequence ID" value="XP_001973500.1"/>
    <property type="gene ID" value="LOC6545986"/>
</dbReference>
<dbReference type="GeneID" id="6545986"/>
<dbReference type="KEGG" id="der:6545986"/>
<dbReference type="eggNOG" id="KOG4783">
    <property type="taxonomic scope" value="Eukaryota"/>
</dbReference>
<dbReference type="HOGENOM" id="CLU_143588_2_0_1"/>
<dbReference type="OMA" id="PYFRGNE"/>
<dbReference type="OrthoDB" id="160405at2759"/>
<dbReference type="PhylomeDB" id="B3NIN0"/>
<dbReference type="Proteomes" id="UP000008711">
    <property type="component" value="Unassembled WGS sequence"/>
</dbReference>
<dbReference type="GO" id="GO:0005789">
    <property type="term" value="C:endoplasmic reticulum membrane"/>
    <property type="evidence" value="ECO:0007669"/>
    <property type="project" value="UniProtKB-SubCell"/>
</dbReference>
<dbReference type="GO" id="GO:0033116">
    <property type="term" value="C:endoplasmic reticulum-Golgi intermediate compartment membrane"/>
    <property type="evidence" value="ECO:0007669"/>
    <property type="project" value="UniProtKB-SubCell"/>
</dbReference>
<dbReference type="GO" id="GO:0012507">
    <property type="term" value="C:ER to Golgi transport vesicle membrane"/>
    <property type="evidence" value="ECO:0007669"/>
    <property type="project" value="UniProtKB-SubCell"/>
</dbReference>
<dbReference type="GO" id="GO:0070072">
    <property type="term" value="P:vacuolar proton-transporting V-type ATPase complex assembly"/>
    <property type="evidence" value="ECO:0007669"/>
    <property type="project" value="UniProtKB-UniRule"/>
</dbReference>
<dbReference type="HAMAP" id="MF_03058">
    <property type="entry name" value="VMA21"/>
    <property type="match status" value="1"/>
</dbReference>
<dbReference type="InterPro" id="IPR019013">
    <property type="entry name" value="Vma21"/>
</dbReference>
<dbReference type="Pfam" id="PF09446">
    <property type="entry name" value="VMA21"/>
    <property type="match status" value="1"/>
</dbReference>
<proteinExistence type="inferred from homology"/>
<accession>B3NIN0</accession>
<organism>
    <name type="scientific">Drosophila erecta</name>
    <name type="common">Fruit fly</name>
    <dbReference type="NCBI Taxonomy" id="7220"/>
    <lineage>
        <taxon>Eukaryota</taxon>
        <taxon>Metazoa</taxon>
        <taxon>Ecdysozoa</taxon>
        <taxon>Arthropoda</taxon>
        <taxon>Hexapoda</taxon>
        <taxon>Insecta</taxon>
        <taxon>Pterygota</taxon>
        <taxon>Neoptera</taxon>
        <taxon>Endopterygota</taxon>
        <taxon>Diptera</taxon>
        <taxon>Brachycera</taxon>
        <taxon>Muscomorpha</taxon>
        <taxon>Ephydroidea</taxon>
        <taxon>Drosophilidae</taxon>
        <taxon>Drosophila</taxon>
        <taxon>Sophophora</taxon>
    </lineage>
</organism>
<gene>
    <name type="ORF">GG16118</name>
</gene>
<feature type="chain" id="PRO_0000377572" description="Vacuolar ATPase assembly integral membrane protein VMA21 homolog">
    <location>
        <begin position="1"/>
        <end position="105"/>
    </location>
</feature>
<feature type="topological domain" description="Cytoplasmic" evidence="1">
    <location>
        <begin position="1"/>
        <end position="36"/>
    </location>
</feature>
<feature type="transmembrane region" description="Helical" evidence="1">
    <location>
        <begin position="37"/>
        <end position="57"/>
    </location>
</feature>
<feature type="topological domain" description="Lumenal" evidence="1">
    <location>
        <begin position="58"/>
        <end position="68"/>
    </location>
</feature>
<feature type="transmembrane region" description="Helical" evidence="1">
    <location>
        <begin position="69"/>
        <end position="89"/>
    </location>
</feature>
<feature type="topological domain" description="Cytoplasmic" evidence="1">
    <location>
        <begin position="90"/>
        <end position="105"/>
    </location>
</feature>
<feature type="region of interest" description="Disordered" evidence="2">
    <location>
        <begin position="1"/>
        <end position="26"/>
    </location>
</feature>